<keyword id="KW-1003">Cell membrane</keyword>
<keyword id="KW-0966">Cell projection</keyword>
<keyword id="KW-0200">Cytadherence</keyword>
<keyword id="KW-0472">Membrane</keyword>
<keyword id="KW-1185">Reference proteome</keyword>
<keyword id="KW-0843">Virulence</keyword>
<dbReference type="EMBL" id="L43967">
    <property type="protein sequence ID" value="AAC71539.1"/>
    <property type="molecule type" value="Genomic_DNA"/>
</dbReference>
<dbReference type="EMBL" id="L43097">
    <property type="protein sequence ID" value="AAA99946.1"/>
    <property type="molecule type" value="Genomic_DNA"/>
</dbReference>
<dbReference type="EMBL" id="U01716">
    <property type="protein sequence ID" value="AAC43190.1"/>
    <property type="status" value="ALT_INIT"/>
    <property type="molecule type" value="Unassigned_DNA"/>
</dbReference>
<dbReference type="EMBL" id="U02224">
    <property type="protein sequence ID" value="AAA03378.1"/>
    <property type="molecule type" value="Genomic_DNA"/>
</dbReference>
<dbReference type="EMBL" id="U02267">
    <property type="protein sequence ID" value="AAD12533.1"/>
    <property type="molecule type" value="Genomic_DNA"/>
</dbReference>
<dbReference type="PIR" id="A64235">
    <property type="entry name" value="A64235"/>
</dbReference>
<dbReference type="RefSeq" id="WP_010869426.1">
    <property type="nucleotide sequence ID" value="NC_000908.2"/>
</dbReference>
<dbReference type="SMR" id="Q57081"/>
<dbReference type="STRING" id="243273.MG_317"/>
<dbReference type="GeneID" id="88282480"/>
<dbReference type="KEGG" id="mge:MG_317"/>
<dbReference type="eggNOG" id="COG3115">
    <property type="taxonomic scope" value="Bacteria"/>
</dbReference>
<dbReference type="HOGENOM" id="CLU_455483_0_0_14"/>
<dbReference type="InParanoid" id="Q57081"/>
<dbReference type="OrthoDB" id="10017470at2"/>
<dbReference type="BioCyc" id="MGEN243273:G1GJ2-386-MONOMER"/>
<dbReference type="Proteomes" id="UP000000807">
    <property type="component" value="Chromosome"/>
</dbReference>
<dbReference type="GO" id="GO:0033111">
    <property type="term" value="C:attachment organelle membrane"/>
    <property type="evidence" value="ECO:0007669"/>
    <property type="project" value="UniProtKB-SubCell"/>
</dbReference>
<dbReference type="GO" id="GO:0042995">
    <property type="term" value="C:cell projection"/>
    <property type="evidence" value="ECO:0007669"/>
    <property type="project" value="UniProtKB-KW"/>
</dbReference>
<dbReference type="GO" id="GO:0005886">
    <property type="term" value="C:plasma membrane"/>
    <property type="evidence" value="ECO:0007669"/>
    <property type="project" value="UniProtKB-KW"/>
</dbReference>
<dbReference type="GO" id="GO:0020035">
    <property type="term" value="P:adhesion of symbiont to microvasculature"/>
    <property type="evidence" value="ECO:0007669"/>
    <property type="project" value="UniProtKB-KW"/>
</dbReference>
<accession>Q57081</accession>
<accession>Q49191</accession>
<accession>Q49337</accession>
<accession>Q49370</accession>
<evidence type="ECO:0000250" key="1"/>
<evidence type="ECO:0000256" key="2">
    <source>
        <dbReference type="SAM" id="MobiDB-lite"/>
    </source>
</evidence>
<evidence type="ECO:0000305" key="3"/>
<protein>
    <recommendedName>
        <fullName>Cytadherence high molecular weight protein 3</fullName>
    </recommendedName>
    <alternativeName>
        <fullName>Accessory adhesin protein 3</fullName>
    </alternativeName>
    <alternativeName>
        <fullName>Cytadherence accessory protein 3</fullName>
    </alternativeName>
    <alternativeName>
        <fullName>P69</fullName>
    </alternativeName>
</protein>
<sequence>MNDKQKAKINKAYNKLLKKINKRYPDVSVVYARDHKNKVHALYQDPESGNIFSLEKRKQLASNYPLFELTSDNPISFTNNIVSLNAYDDKNNLVTVQYDQDNNTFYDQNGNVLDVSSYTDEKKVPLINYLSSTQTSQEQPTQQDYPSIDAGLPKIEVDDQPKAAQHTTLETESEPDVFELNDSLNQPQQPTENLGDDQFVEKEVPPTQQLHQDLVHQQPVQVDSGSQNHSFNNSPSLKPPLVNKPAKLVQPEVKHIPQVEVQPKPQIVEPKIEPKPEVKHVSHVEIQPKPEVKPVVDSVPEVKQPEVKHVPHVEVQPKPVVDLKPQRIEPRIESKPEVIKHIPQVEVQPKAQMVEPRIEPKPETKYIPQVESTPQVEVHHWKPEVKTEYQPQQPLPTSGLQIKVVPRSAALLQSKLDTGFQPRQVERTTDSDITVSVSSHASLLEKINALNHQRIMSDIALKSDNTIKSSNFSRFYPENEYVATKYSDPLYSDTNQSLTSDRFSLDFDYTPKSRVNNYTPLRSTNFQNNAISNYRFSRTPSSYYPLTRRPWRLTNISSYRSSFHSPTRLSSFRRTSLPFSSSYDGLRRYPSRSYWSKDF</sequence>
<reference key="1">
    <citation type="journal article" date="1995" name="J. Bacteriol.">
        <title>Molecular cloning and characterization of an adherence-related operon of Mycoplasma genitalium.</title>
        <authorList>
            <person name="Reddy S.P."/>
            <person name="Rasmussen W.G."/>
            <person name="Baseman J.B."/>
        </authorList>
    </citation>
    <scope>NUCLEOTIDE SEQUENCE [GENOMIC DNA]</scope>
    <source>
        <strain>ATCC 33530 / DSM 19775 / NCTC 10195 / G37</strain>
    </source>
</reference>
<reference key="2">
    <citation type="journal article" date="1995" name="Science">
        <title>The minimal gene complement of Mycoplasma genitalium.</title>
        <authorList>
            <person name="Fraser C.M."/>
            <person name="Gocayne J.D."/>
            <person name="White O."/>
            <person name="Adams M.D."/>
            <person name="Clayton R.A."/>
            <person name="Fleischmann R.D."/>
            <person name="Bult C.J."/>
            <person name="Kerlavage A.R."/>
            <person name="Sutton G.G."/>
            <person name="Kelley J.M."/>
            <person name="Fritchman J.L."/>
            <person name="Weidman J.F."/>
            <person name="Small K.V."/>
            <person name="Sandusky M."/>
            <person name="Fuhrmann J.L."/>
            <person name="Nguyen D.T."/>
            <person name="Utterback T.R."/>
            <person name="Saudek D.M."/>
            <person name="Phillips C.A."/>
            <person name="Merrick J.M."/>
            <person name="Tomb J.-F."/>
            <person name="Dougherty B.A."/>
            <person name="Bott K.F."/>
            <person name="Hu P.-C."/>
            <person name="Lucier T.S."/>
            <person name="Peterson S.N."/>
            <person name="Smith H.O."/>
            <person name="Hutchison C.A. III"/>
            <person name="Venter J.C."/>
        </authorList>
    </citation>
    <scope>NUCLEOTIDE SEQUENCE [LARGE SCALE GENOMIC DNA]</scope>
    <source>
        <strain>ATCC 33530 / DSM 19775 / NCTC 10195 / G37</strain>
    </source>
</reference>
<reference key="3">
    <citation type="journal article" date="1993" name="J. Bacteriol.">
        <title>A survey of the Mycoplasma genitalium genome by using random sequencing.</title>
        <authorList>
            <person name="Peterson S.N."/>
            <person name="Hu P.-C."/>
            <person name="Bott K.F."/>
            <person name="Hutchison C.A. III"/>
        </authorList>
    </citation>
    <scope>NUCLEOTIDE SEQUENCE [GENOMIC DNA] OF 1-24; 57-169 AND 444-514</scope>
    <source>
        <strain>ATCC 33530 / DSM 19775 / NCTC 10195 / G37</strain>
    </source>
</reference>
<feature type="chain" id="PRO_0000084015" description="Cytadherence high molecular weight protein 3">
    <location>
        <begin position="1"/>
        <end position="599"/>
    </location>
</feature>
<feature type="region of interest" description="Disordered" evidence="2">
    <location>
        <begin position="220"/>
        <end position="241"/>
    </location>
</feature>
<feature type="compositionally biased region" description="Polar residues" evidence="2">
    <location>
        <begin position="220"/>
        <end position="236"/>
    </location>
</feature>
<gene>
    <name type="primary">hmw3</name>
    <name type="ordered locus">MG317</name>
</gene>
<name>HMW3_MYCGE</name>
<comment type="function">
    <text evidence="1">Component of the cytoskeleton-like structure which stabilizes the shape of the wall-less mycoplasma. This cytoskeleton-like network of accessory proteins containing HMW proteins 1 to 5 allows the proper anchoring of cytadhesin proteins in the mycoplasmal membrane at the attachment organelle. Essential for successful surface parasitism (By similarity).</text>
</comment>
<comment type="subcellular location">
    <subcellularLocation>
        <location evidence="1">Cell projection</location>
        <location evidence="1">Attachment organelle membrane</location>
    </subcellularLocation>
    <text evidence="1">Localizes specifically to the attachment membrane.</text>
</comment>
<comment type="sequence caution" evidence="3">
    <conflict type="erroneous initiation">
        <sequence resource="EMBL-CDS" id="AAC43190"/>
    </conflict>
</comment>
<proteinExistence type="inferred from homology"/>
<organism>
    <name type="scientific">Mycoplasma genitalium (strain ATCC 33530 / DSM 19775 / NCTC 10195 / G37)</name>
    <name type="common">Mycoplasmoides genitalium</name>
    <dbReference type="NCBI Taxonomy" id="243273"/>
    <lineage>
        <taxon>Bacteria</taxon>
        <taxon>Bacillati</taxon>
        <taxon>Mycoplasmatota</taxon>
        <taxon>Mycoplasmoidales</taxon>
        <taxon>Mycoplasmoidaceae</taxon>
        <taxon>Mycoplasmoides</taxon>
    </lineage>
</organism>